<keyword id="KW-0997">Cell inner membrane</keyword>
<keyword id="KW-1003">Cell membrane</keyword>
<keyword id="KW-0460">Magnesium</keyword>
<keyword id="KW-0472">Membrane</keyword>
<keyword id="KW-0808">Transferase</keyword>
<keyword id="KW-0812">Transmembrane</keyword>
<keyword id="KW-1133">Transmembrane helix</keyword>
<keyword id="KW-0831">Ubiquinone biosynthesis</keyword>
<proteinExistence type="inferred from homology"/>
<feature type="chain" id="PRO_0000262863" description="4-hydroxybenzoate octaprenyltransferase">
    <location>
        <begin position="1"/>
        <end position="288"/>
    </location>
</feature>
<feature type="transmembrane region" description="Helical" evidence="1">
    <location>
        <begin position="23"/>
        <end position="43"/>
    </location>
</feature>
<feature type="transmembrane region" description="Helical" evidence="1">
    <location>
        <begin position="46"/>
        <end position="66"/>
    </location>
</feature>
<feature type="transmembrane region" description="Helical" evidence="1">
    <location>
        <begin position="98"/>
        <end position="118"/>
    </location>
</feature>
<feature type="transmembrane region" description="Helical" evidence="1">
    <location>
        <begin position="141"/>
        <end position="161"/>
    </location>
</feature>
<feature type="transmembrane region" description="Helical" evidence="1">
    <location>
        <begin position="163"/>
        <end position="183"/>
    </location>
</feature>
<feature type="transmembrane region" description="Helical" evidence="1">
    <location>
        <begin position="213"/>
        <end position="233"/>
    </location>
</feature>
<feature type="transmembrane region" description="Helical" evidence="1">
    <location>
        <begin position="234"/>
        <end position="254"/>
    </location>
</feature>
<feature type="transmembrane region" description="Helical" evidence="1">
    <location>
        <begin position="268"/>
        <end position="288"/>
    </location>
</feature>
<sequence>MKGSTVHTKWQAYCRLMRIDKPIGSLLLLWPTLWALWLAGRGIPEAKILVVFVLGVFFMRAAGCVVNDYADRHIDGFVKRTASRPLPSGTISEKESKILFVVLILLSFGLVLTLNSMTIWLSLAALALAWIYPFMKRVTHLPQVVLGAAFGWSIPMGFAAVSESLPLVCWLLLLANICWTVAYDTQYAMVDRDDDLRIGVKSTAILFGQHDKLIIGLLQLATLLLMVAIGWLMNLGGAFYWSILLAGALFTHQQKMIAQREREPCFRAFLNNNYVGLVLFLGILISYW</sequence>
<comment type="function">
    <text evidence="1">Catalyzes the prenylation of para-hydroxybenzoate (PHB) with an all-trans polyprenyl group. Mediates the second step in the final reaction sequence of ubiquinone-8 (UQ-8) biosynthesis, which is the condensation of the polyisoprenoid side chain with PHB, generating the first membrane-bound Q intermediate 3-octaprenyl-4-hydroxybenzoate.</text>
</comment>
<comment type="catalytic activity">
    <reaction evidence="1">
        <text>all-trans-octaprenyl diphosphate + 4-hydroxybenzoate = 4-hydroxy-3-(all-trans-octaprenyl)benzoate + diphosphate</text>
        <dbReference type="Rhea" id="RHEA:27782"/>
        <dbReference type="ChEBI" id="CHEBI:1617"/>
        <dbReference type="ChEBI" id="CHEBI:17879"/>
        <dbReference type="ChEBI" id="CHEBI:33019"/>
        <dbReference type="ChEBI" id="CHEBI:57711"/>
        <dbReference type="EC" id="2.5.1.39"/>
    </reaction>
</comment>
<comment type="cofactor">
    <cofactor evidence="1">
        <name>Mg(2+)</name>
        <dbReference type="ChEBI" id="CHEBI:18420"/>
    </cofactor>
</comment>
<comment type="pathway">
    <text evidence="1">Cofactor biosynthesis; ubiquinone biosynthesis.</text>
</comment>
<comment type="subcellular location">
    <subcellularLocation>
        <location evidence="1">Cell inner membrane</location>
        <topology evidence="1">Multi-pass membrane protein</topology>
    </subcellularLocation>
</comment>
<comment type="similarity">
    <text evidence="1">Belongs to the UbiA prenyltransferase family.</text>
</comment>
<reference key="1">
    <citation type="journal article" date="2006" name="J. Bacteriol.">
        <title>Complete genome sequence of Yersinia pestis strains Antiqua and Nepal516: evidence of gene reduction in an emerging pathogen.</title>
        <authorList>
            <person name="Chain P.S.G."/>
            <person name="Hu P."/>
            <person name="Malfatti S.A."/>
            <person name="Radnedge L."/>
            <person name="Larimer F."/>
            <person name="Vergez L.M."/>
            <person name="Worsham P."/>
            <person name="Chu M.C."/>
            <person name="Andersen G.L."/>
        </authorList>
    </citation>
    <scope>NUCLEOTIDE SEQUENCE [LARGE SCALE GENOMIC DNA]</scope>
    <source>
        <strain>Antiqua</strain>
    </source>
</reference>
<evidence type="ECO:0000255" key="1">
    <source>
        <dbReference type="HAMAP-Rule" id="MF_01635"/>
    </source>
</evidence>
<name>UBIA_YERPA</name>
<organism>
    <name type="scientific">Yersinia pestis bv. Antiqua (strain Antiqua)</name>
    <dbReference type="NCBI Taxonomy" id="360102"/>
    <lineage>
        <taxon>Bacteria</taxon>
        <taxon>Pseudomonadati</taxon>
        <taxon>Pseudomonadota</taxon>
        <taxon>Gammaproteobacteria</taxon>
        <taxon>Enterobacterales</taxon>
        <taxon>Yersiniaceae</taxon>
        <taxon>Yersinia</taxon>
    </lineage>
</organism>
<dbReference type="EC" id="2.5.1.39" evidence="1"/>
<dbReference type="EMBL" id="CP000308">
    <property type="protein sequence ID" value="ABG15934.1"/>
    <property type="molecule type" value="Genomic_DNA"/>
</dbReference>
<dbReference type="RefSeq" id="WP_002209088.1">
    <property type="nucleotide sequence ID" value="NZ_CP009906.1"/>
</dbReference>
<dbReference type="SMR" id="Q1C0T8"/>
<dbReference type="GeneID" id="57974293"/>
<dbReference type="KEGG" id="ypa:YPA_3973"/>
<dbReference type="UniPathway" id="UPA00232"/>
<dbReference type="Proteomes" id="UP000001971">
    <property type="component" value="Chromosome"/>
</dbReference>
<dbReference type="GO" id="GO:0005886">
    <property type="term" value="C:plasma membrane"/>
    <property type="evidence" value="ECO:0007669"/>
    <property type="project" value="UniProtKB-SubCell"/>
</dbReference>
<dbReference type="GO" id="GO:0008412">
    <property type="term" value="F:4-hydroxybenzoate polyprenyltransferase activity"/>
    <property type="evidence" value="ECO:0007669"/>
    <property type="project" value="UniProtKB-UniRule"/>
</dbReference>
<dbReference type="GO" id="GO:0006744">
    <property type="term" value="P:ubiquinone biosynthetic process"/>
    <property type="evidence" value="ECO:0007669"/>
    <property type="project" value="UniProtKB-UniRule"/>
</dbReference>
<dbReference type="CDD" id="cd13959">
    <property type="entry name" value="PT_UbiA_COQ2"/>
    <property type="match status" value="1"/>
</dbReference>
<dbReference type="FunFam" id="1.10.357.140:FF:000002">
    <property type="entry name" value="4-hydroxybenzoate octaprenyltransferase"/>
    <property type="match status" value="1"/>
</dbReference>
<dbReference type="FunFam" id="1.20.120.1780:FF:000001">
    <property type="entry name" value="4-hydroxybenzoate octaprenyltransferase"/>
    <property type="match status" value="1"/>
</dbReference>
<dbReference type="Gene3D" id="1.10.357.140">
    <property type="entry name" value="UbiA prenyltransferase"/>
    <property type="match status" value="1"/>
</dbReference>
<dbReference type="Gene3D" id="1.20.120.1780">
    <property type="entry name" value="UbiA prenyltransferase"/>
    <property type="match status" value="1"/>
</dbReference>
<dbReference type="HAMAP" id="MF_01635">
    <property type="entry name" value="UbiA"/>
    <property type="match status" value="1"/>
</dbReference>
<dbReference type="InterPro" id="IPR006370">
    <property type="entry name" value="HB_polyprenyltransferase-like"/>
</dbReference>
<dbReference type="InterPro" id="IPR039653">
    <property type="entry name" value="Prenyltransferase"/>
</dbReference>
<dbReference type="InterPro" id="IPR000537">
    <property type="entry name" value="UbiA_prenyltransferase"/>
</dbReference>
<dbReference type="InterPro" id="IPR030470">
    <property type="entry name" value="UbiA_prenylTrfase_CS"/>
</dbReference>
<dbReference type="InterPro" id="IPR044878">
    <property type="entry name" value="UbiA_sf"/>
</dbReference>
<dbReference type="NCBIfam" id="TIGR01474">
    <property type="entry name" value="ubiA_proteo"/>
    <property type="match status" value="1"/>
</dbReference>
<dbReference type="PANTHER" id="PTHR11048:SF28">
    <property type="entry name" value="4-HYDROXYBENZOATE POLYPRENYLTRANSFERASE, MITOCHONDRIAL"/>
    <property type="match status" value="1"/>
</dbReference>
<dbReference type="PANTHER" id="PTHR11048">
    <property type="entry name" value="PRENYLTRANSFERASES"/>
    <property type="match status" value="1"/>
</dbReference>
<dbReference type="Pfam" id="PF01040">
    <property type="entry name" value="UbiA"/>
    <property type="match status" value="1"/>
</dbReference>
<dbReference type="PROSITE" id="PS00943">
    <property type="entry name" value="UBIA"/>
    <property type="match status" value="1"/>
</dbReference>
<protein>
    <recommendedName>
        <fullName evidence="1">4-hydroxybenzoate octaprenyltransferase</fullName>
        <ecNumber evidence="1">2.5.1.39</ecNumber>
    </recommendedName>
    <alternativeName>
        <fullName evidence="1">4-HB polyprenyltransferase</fullName>
    </alternativeName>
</protein>
<gene>
    <name evidence="1" type="primary">ubiA</name>
    <name type="ordered locus">YPA_3973</name>
</gene>
<accession>Q1C0T8</accession>